<name>EFG_RUMCH</name>
<evidence type="ECO:0000255" key="1">
    <source>
        <dbReference type="HAMAP-Rule" id="MF_00054"/>
    </source>
</evidence>
<gene>
    <name evidence="1" type="primary">fusA</name>
    <name type="ordered locus">Ccel_0317</name>
</gene>
<reference key="1">
    <citation type="submission" date="2009-01" db="EMBL/GenBank/DDBJ databases">
        <title>Complete sequence of Clostridium cellulolyticum H10.</title>
        <authorList>
            <consortium name="US DOE Joint Genome Institute"/>
            <person name="Lucas S."/>
            <person name="Copeland A."/>
            <person name="Lapidus A."/>
            <person name="Glavina del Rio T."/>
            <person name="Dalin E."/>
            <person name="Tice H."/>
            <person name="Bruce D."/>
            <person name="Goodwin L."/>
            <person name="Pitluck S."/>
            <person name="Chertkov O."/>
            <person name="Saunders E."/>
            <person name="Brettin T."/>
            <person name="Detter J.C."/>
            <person name="Han C."/>
            <person name="Larimer F."/>
            <person name="Land M."/>
            <person name="Hauser L."/>
            <person name="Kyrpides N."/>
            <person name="Ivanova N."/>
            <person name="Zhou J."/>
            <person name="Richardson P."/>
        </authorList>
    </citation>
    <scope>NUCLEOTIDE SEQUENCE [LARGE SCALE GENOMIC DNA]</scope>
    <source>
        <strain>ATCC 35319 / DSM 5812 / JCM 6584 / H10</strain>
    </source>
</reference>
<dbReference type="EMBL" id="CP001348">
    <property type="protein sequence ID" value="ACL74704.1"/>
    <property type="molecule type" value="Genomic_DNA"/>
</dbReference>
<dbReference type="RefSeq" id="WP_012634769.1">
    <property type="nucleotide sequence ID" value="NC_011898.1"/>
</dbReference>
<dbReference type="SMR" id="B8I5N7"/>
<dbReference type="STRING" id="394503.Ccel_0317"/>
<dbReference type="KEGG" id="cce:Ccel_0317"/>
<dbReference type="eggNOG" id="COG0480">
    <property type="taxonomic scope" value="Bacteria"/>
</dbReference>
<dbReference type="HOGENOM" id="CLU_002794_4_1_9"/>
<dbReference type="OrthoDB" id="9804431at2"/>
<dbReference type="Proteomes" id="UP000001349">
    <property type="component" value="Chromosome"/>
</dbReference>
<dbReference type="GO" id="GO:0005737">
    <property type="term" value="C:cytoplasm"/>
    <property type="evidence" value="ECO:0007669"/>
    <property type="project" value="UniProtKB-SubCell"/>
</dbReference>
<dbReference type="GO" id="GO:0005525">
    <property type="term" value="F:GTP binding"/>
    <property type="evidence" value="ECO:0007669"/>
    <property type="project" value="UniProtKB-UniRule"/>
</dbReference>
<dbReference type="GO" id="GO:0003924">
    <property type="term" value="F:GTPase activity"/>
    <property type="evidence" value="ECO:0007669"/>
    <property type="project" value="InterPro"/>
</dbReference>
<dbReference type="GO" id="GO:0003746">
    <property type="term" value="F:translation elongation factor activity"/>
    <property type="evidence" value="ECO:0007669"/>
    <property type="project" value="UniProtKB-UniRule"/>
</dbReference>
<dbReference type="GO" id="GO:0032790">
    <property type="term" value="P:ribosome disassembly"/>
    <property type="evidence" value="ECO:0007669"/>
    <property type="project" value="TreeGrafter"/>
</dbReference>
<dbReference type="CDD" id="cd01886">
    <property type="entry name" value="EF-G"/>
    <property type="match status" value="1"/>
</dbReference>
<dbReference type="CDD" id="cd16262">
    <property type="entry name" value="EFG_III"/>
    <property type="match status" value="1"/>
</dbReference>
<dbReference type="CDD" id="cd01434">
    <property type="entry name" value="EFG_mtEFG1_IV"/>
    <property type="match status" value="1"/>
</dbReference>
<dbReference type="CDD" id="cd03713">
    <property type="entry name" value="EFG_mtEFG_C"/>
    <property type="match status" value="1"/>
</dbReference>
<dbReference type="CDD" id="cd04088">
    <property type="entry name" value="EFG_mtEFG_II"/>
    <property type="match status" value="1"/>
</dbReference>
<dbReference type="FunFam" id="2.40.30.10:FF:000006">
    <property type="entry name" value="Elongation factor G"/>
    <property type="match status" value="1"/>
</dbReference>
<dbReference type="FunFam" id="3.30.230.10:FF:000003">
    <property type="entry name" value="Elongation factor G"/>
    <property type="match status" value="1"/>
</dbReference>
<dbReference type="FunFam" id="3.30.70.240:FF:000001">
    <property type="entry name" value="Elongation factor G"/>
    <property type="match status" value="1"/>
</dbReference>
<dbReference type="FunFam" id="3.30.70.870:FF:000001">
    <property type="entry name" value="Elongation factor G"/>
    <property type="match status" value="1"/>
</dbReference>
<dbReference type="FunFam" id="3.40.50.300:FF:000029">
    <property type="entry name" value="Elongation factor G"/>
    <property type="match status" value="1"/>
</dbReference>
<dbReference type="Gene3D" id="3.30.230.10">
    <property type="match status" value="1"/>
</dbReference>
<dbReference type="Gene3D" id="3.30.70.240">
    <property type="match status" value="1"/>
</dbReference>
<dbReference type="Gene3D" id="3.30.70.870">
    <property type="entry name" value="Elongation Factor G (Translational Gtpase), domain 3"/>
    <property type="match status" value="1"/>
</dbReference>
<dbReference type="Gene3D" id="3.40.50.300">
    <property type="entry name" value="P-loop containing nucleotide triphosphate hydrolases"/>
    <property type="match status" value="1"/>
</dbReference>
<dbReference type="Gene3D" id="2.40.30.10">
    <property type="entry name" value="Translation factors"/>
    <property type="match status" value="1"/>
</dbReference>
<dbReference type="HAMAP" id="MF_00054_B">
    <property type="entry name" value="EF_G_EF_2_B"/>
    <property type="match status" value="1"/>
</dbReference>
<dbReference type="InterPro" id="IPR041095">
    <property type="entry name" value="EFG_II"/>
</dbReference>
<dbReference type="InterPro" id="IPR009022">
    <property type="entry name" value="EFG_III"/>
</dbReference>
<dbReference type="InterPro" id="IPR035647">
    <property type="entry name" value="EFG_III/V"/>
</dbReference>
<dbReference type="InterPro" id="IPR047872">
    <property type="entry name" value="EFG_IV"/>
</dbReference>
<dbReference type="InterPro" id="IPR035649">
    <property type="entry name" value="EFG_V"/>
</dbReference>
<dbReference type="InterPro" id="IPR000640">
    <property type="entry name" value="EFG_V-like"/>
</dbReference>
<dbReference type="InterPro" id="IPR004161">
    <property type="entry name" value="EFTu-like_2"/>
</dbReference>
<dbReference type="InterPro" id="IPR031157">
    <property type="entry name" value="G_TR_CS"/>
</dbReference>
<dbReference type="InterPro" id="IPR027417">
    <property type="entry name" value="P-loop_NTPase"/>
</dbReference>
<dbReference type="InterPro" id="IPR020568">
    <property type="entry name" value="Ribosomal_Su5_D2-typ_SF"/>
</dbReference>
<dbReference type="InterPro" id="IPR014721">
    <property type="entry name" value="Ribsml_uS5_D2-typ_fold_subgr"/>
</dbReference>
<dbReference type="InterPro" id="IPR005225">
    <property type="entry name" value="Small_GTP-bd"/>
</dbReference>
<dbReference type="InterPro" id="IPR000795">
    <property type="entry name" value="T_Tr_GTP-bd_dom"/>
</dbReference>
<dbReference type="InterPro" id="IPR009000">
    <property type="entry name" value="Transl_B-barrel_sf"/>
</dbReference>
<dbReference type="InterPro" id="IPR004540">
    <property type="entry name" value="Transl_elong_EFG/EF2"/>
</dbReference>
<dbReference type="InterPro" id="IPR005517">
    <property type="entry name" value="Transl_elong_EFG/EF2_IV"/>
</dbReference>
<dbReference type="NCBIfam" id="TIGR00484">
    <property type="entry name" value="EF-G"/>
    <property type="match status" value="1"/>
</dbReference>
<dbReference type="NCBIfam" id="NF009379">
    <property type="entry name" value="PRK12740.1-3"/>
    <property type="match status" value="1"/>
</dbReference>
<dbReference type="NCBIfam" id="NF009381">
    <property type="entry name" value="PRK12740.1-5"/>
    <property type="match status" value="1"/>
</dbReference>
<dbReference type="NCBIfam" id="TIGR00231">
    <property type="entry name" value="small_GTP"/>
    <property type="match status" value="1"/>
</dbReference>
<dbReference type="PANTHER" id="PTHR43261:SF1">
    <property type="entry name" value="RIBOSOME-RELEASING FACTOR 2, MITOCHONDRIAL"/>
    <property type="match status" value="1"/>
</dbReference>
<dbReference type="PANTHER" id="PTHR43261">
    <property type="entry name" value="TRANSLATION ELONGATION FACTOR G-RELATED"/>
    <property type="match status" value="1"/>
</dbReference>
<dbReference type="Pfam" id="PF00679">
    <property type="entry name" value="EFG_C"/>
    <property type="match status" value="1"/>
</dbReference>
<dbReference type="Pfam" id="PF14492">
    <property type="entry name" value="EFG_III"/>
    <property type="match status" value="1"/>
</dbReference>
<dbReference type="Pfam" id="PF03764">
    <property type="entry name" value="EFG_IV"/>
    <property type="match status" value="1"/>
</dbReference>
<dbReference type="Pfam" id="PF00009">
    <property type="entry name" value="GTP_EFTU"/>
    <property type="match status" value="1"/>
</dbReference>
<dbReference type="Pfam" id="PF03144">
    <property type="entry name" value="GTP_EFTU_D2"/>
    <property type="match status" value="1"/>
</dbReference>
<dbReference type="PRINTS" id="PR00315">
    <property type="entry name" value="ELONGATNFCT"/>
</dbReference>
<dbReference type="SMART" id="SM00838">
    <property type="entry name" value="EFG_C"/>
    <property type="match status" value="1"/>
</dbReference>
<dbReference type="SMART" id="SM00889">
    <property type="entry name" value="EFG_IV"/>
    <property type="match status" value="1"/>
</dbReference>
<dbReference type="SUPFAM" id="SSF54980">
    <property type="entry name" value="EF-G C-terminal domain-like"/>
    <property type="match status" value="2"/>
</dbReference>
<dbReference type="SUPFAM" id="SSF52540">
    <property type="entry name" value="P-loop containing nucleoside triphosphate hydrolases"/>
    <property type="match status" value="1"/>
</dbReference>
<dbReference type="SUPFAM" id="SSF54211">
    <property type="entry name" value="Ribosomal protein S5 domain 2-like"/>
    <property type="match status" value="1"/>
</dbReference>
<dbReference type="SUPFAM" id="SSF50447">
    <property type="entry name" value="Translation proteins"/>
    <property type="match status" value="1"/>
</dbReference>
<dbReference type="PROSITE" id="PS00301">
    <property type="entry name" value="G_TR_1"/>
    <property type="match status" value="1"/>
</dbReference>
<dbReference type="PROSITE" id="PS51722">
    <property type="entry name" value="G_TR_2"/>
    <property type="match status" value="1"/>
</dbReference>
<protein>
    <recommendedName>
        <fullName evidence="1">Elongation factor G</fullName>
        <shortName evidence="1">EF-G</shortName>
    </recommendedName>
</protein>
<accession>B8I5N7</accession>
<feature type="chain" id="PRO_1000201450" description="Elongation factor G">
    <location>
        <begin position="1"/>
        <end position="693"/>
    </location>
</feature>
<feature type="domain" description="tr-type G">
    <location>
        <begin position="8"/>
        <end position="282"/>
    </location>
</feature>
<feature type="binding site" evidence="1">
    <location>
        <begin position="17"/>
        <end position="24"/>
    </location>
    <ligand>
        <name>GTP</name>
        <dbReference type="ChEBI" id="CHEBI:37565"/>
    </ligand>
</feature>
<feature type="binding site" evidence="1">
    <location>
        <begin position="81"/>
        <end position="85"/>
    </location>
    <ligand>
        <name>GTP</name>
        <dbReference type="ChEBI" id="CHEBI:37565"/>
    </ligand>
</feature>
<feature type="binding site" evidence="1">
    <location>
        <begin position="135"/>
        <end position="138"/>
    </location>
    <ligand>
        <name>GTP</name>
        <dbReference type="ChEBI" id="CHEBI:37565"/>
    </ligand>
</feature>
<proteinExistence type="inferred from homology"/>
<comment type="function">
    <text evidence="1">Catalyzes the GTP-dependent ribosomal translocation step during translation elongation. During this step, the ribosome changes from the pre-translocational (PRE) to the post-translocational (POST) state as the newly formed A-site-bound peptidyl-tRNA and P-site-bound deacylated tRNA move to the P and E sites, respectively. Catalyzes the coordinated movement of the two tRNA molecules, the mRNA and conformational changes in the ribosome.</text>
</comment>
<comment type="subcellular location">
    <subcellularLocation>
        <location evidence="1">Cytoplasm</location>
    </subcellularLocation>
</comment>
<comment type="similarity">
    <text evidence="1">Belongs to the TRAFAC class translation factor GTPase superfamily. Classic translation factor GTPase family. EF-G/EF-2 subfamily.</text>
</comment>
<organism>
    <name type="scientific">Ruminiclostridium cellulolyticum (strain ATCC 35319 / DSM 5812 / JCM 6584 / H10)</name>
    <name type="common">Clostridium cellulolyticum</name>
    <dbReference type="NCBI Taxonomy" id="394503"/>
    <lineage>
        <taxon>Bacteria</taxon>
        <taxon>Bacillati</taxon>
        <taxon>Bacillota</taxon>
        <taxon>Clostridia</taxon>
        <taxon>Eubacteriales</taxon>
        <taxon>Oscillospiraceae</taxon>
        <taxon>Ruminiclostridium</taxon>
    </lineage>
</organism>
<sequence length="693" mass="76441">MPRQFDLEHTRNIGIMAHIDAGKTTTTERILFYTGRVHKIGETHEGSATMDWMEQEQERGITITSAATTAQWKGNRINIIDTPGHVDFTVEVERSLRVLDGSVTVFCAKGGVEPQSETVWRQADKYGVPRMAYVNKMDIMGADFYNVIAMMKDRLQCNAVPIQLPIGSEDCFVGMVDLVTMTSHIFKDDLGQVIEDQPIPDDMIEISNKYREQLLEAVAEQDEELMMKYLEGEEFTLEEIKAGIRKATIAVKMIPVTCGSSYKNKGVQQMLDAVIDFMPSPTDIPAIKGISVDGDTEIERPADDNGPFAALAFKIMTDPYVGKLCFFRVYSGTLNSGSYVLNSTKNKRERIGRILQMHANHREEIQVVHSGDIAAAVGLKDTTTGDTLCEENNPVILESMEFPEPVIEVAIEPKTKAGQEKMGVALQKLAEEDPTFRVHTDAETGQTIIGGMGELHLDIIVDRMLREFKVEANVGNPQVSYKETIRKAVKSEMKYARQSGGKGQYGHCVIELEPREPGAGYEFVNKITGGAIPKEYIAPIDAGIQEAMNTGVLAGYNVVDIKVTLIDGSYHEVDSSEMAFKIAGSMAFKDGCRKANPVLLEPIMKVDVSVPEEYMGDVMGGLNARRGRIEGMEARGGAQNIRAVVPLSEMFGYATALRSSTQGRGTFSMQTSHFEEVPKSIQEKVISSRTTGV</sequence>
<keyword id="KW-0963">Cytoplasm</keyword>
<keyword id="KW-0251">Elongation factor</keyword>
<keyword id="KW-0342">GTP-binding</keyword>
<keyword id="KW-0547">Nucleotide-binding</keyword>
<keyword id="KW-0648">Protein biosynthesis</keyword>
<keyword id="KW-1185">Reference proteome</keyword>